<reference key="1">
    <citation type="journal article" date="2001" name="Plant Physiol.">
        <title>The Arabidopsis SOMATIC EMBRYOGENESIS RECEPTOR KINASE 1 gene is expressed in developing ovules and embryos and enhances embryogenic competence in culture.</title>
        <authorList>
            <person name="Hecht V.F.G."/>
            <person name="Vielle-Calzada J.-P."/>
            <person name="Hartog M.V."/>
            <person name="Schmidt E.D.L."/>
            <person name="Boutilier K."/>
            <person name="Grossniklaus U."/>
            <person name="de Vries S.C."/>
        </authorList>
    </citation>
    <scope>NUCLEOTIDE SEQUENCE [GENOMIC DNA / MRNA]</scope>
    <scope>DEVELOPMENTAL STAGE</scope>
    <scope>TISSUE SPECIFICITY</scope>
</reference>
<reference key="2">
    <citation type="journal article" date="2010" name="BMC Genomics">
        <title>Genome-wide cloning and sequence analysis of leucine-rich repeat receptor-like protein kinase genes in Arabidopsis thaliana.</title>
        <authorList>
            <person name="Gou X."/>
            <person name="He K."/>
            <person name="Yang H."/>
            <person name="Yuan T."/>
            <person name="Lin H."/>
            <person name="Clouse S.D."/>
            <person name="Li J."/>
        </authorList>
    </citation>
    <scope>NUCLEOTIDE SEQUENCE [MRNA]</scope>
    <source>
        <strain>cv. Columbia</strain>
    </source>
</reference>
<reference key="3">
    <citation type="journal article" date="2000" name="Nature">
        <title>Sequence and analysis of chromosome 1 of the plant Arabidopsis thaliana.</title>
        <authorList>
            <person name="Theologis A."/>
            <person name="Ecker J.R."/>
            <person name="Palm C.J."/>
            <person name="Federspiel N.A."/>
            <person name="Kaul S."/>
            <person name="White O."/>
            <person name="Alonso J."/>
            <person name="Altafi H."/>
            <person name="Araujo R."/>
            <person name="Bowman C.L."/>
            <person name="Brooks S.Y."/>
            <person name="Buehler E."/>
            <person name="Chan A."/>
            <person name="Chao Q."/>
            <person name="Chen H."/>
            <person name="Cheuk R.F."/>
            <person name="Chin C.W."/>
            <person name="Chung M.K."/>
            <person name="Conn L."/>
            <person name="Conway A.B."/>
            <person name="Conway A.R."/>
            <person name="Creasy T.H."/>
            <person name="Dewar K."/>
            <person name="Dunn P."/>
            <person name="Etgu P."/>
            <person name="Feldblyum T.V."/>
            <person name="Feng J.-D."/>
            <person name="Fong B."/>
            <person name="Fujii C.Y."/>
            <person name="Gill J.E."/>
            <person name="Goldsmith A.D."/>
            <person name="Haas B."/>
            <person name="Hansen N.F."/>
            <person name="Hughes B."/>
            <person name="Huizar L."/>
            <person name="Hunter J.L."/>
            <person name="Jenkins J."/>
            <person name="Johnson-Hopson C."/>
            <person name="Khan S."/>
            <person name="Khaykin E."/>
            <person name="Kim C.J."/>
            <person name="Koo H.L."/>
            <person name="Kremenetskaia I."/>
            <person name="Kurtz D.B."/>
            <person name="Kwan A."/>
            <person name="Lam B."/>
            <person name="Langin-Hooper S."/>
            <person name="Lee A."/>
            <person name="Lee J.M."/>
            <person name="Lenz C.A."/>
            <person name="Li J.H."/>
            <person name="Li Y.-P."/>
            <person name="Lin X."/>
            <person name="Liu S.X."/>
            <person name="Liu Z.A."/>
            <person name="Luros J.S."/>
            <person name="Maiti R."/>
            <person name="Marziali A."/>
            <person name="Militscher J."/>
            <person name="Miranda M."/>
            <person name="Nguyen M."/>
            <person name="Nierman W.C."/>
            <person name="Osborne B.I."/>
            <person name="Pai G."/>
            <person name="Peterson J."/>
            <person name="Pham P.K."/>
            <person name="Rizzo M."/>
            <person name="Rooney T."/>
            <person name="Rowley D."/>
            <person name="Sakano H."/>
            <person name="Salzberg S.L."/>
            <person name="Schwartz J.R."/>
            <person name="Shinn P."/>
            <person name="Southwick A.M."/>
            <person name="Sun H."/>
            <person name="Tallon L.J."/>
            <person name="Tambunga G."/>
            <person name="Toriumi M.J."/>
            <person name="Town C.D."/>
            <person name="Utterback T."/>
            <person name="Van Aken S."/>
            <person name="Vaysberg M."/>
            <person name="Vysotskaia V.S."/>
            <person name="Walker M."/>
            <person name="Wu D."/>
            <person name="Yu G."/>
            <person name="Fraser C.M."/>
            <person name="Venter J.C."/>
            <person name="Davis R.W."/>
        </authorList>
    </citation>
    <scope>NUCLEOTIDE SEQUENCE [LARGE SCALE GENOMIC DNA]</scope>
    <source>
        <strain>cv. Columbia</strain>
    </source>
</reference>
<reference key="4">
    <citation type="journal article" date="2017" name="Plant J.">
        <title>Araport11: a complete reannotation of the Arabidopsis thaliana reference genome.</title>
        <authorList>
            <person name="Cheng C.Y."/>
            <person name="Krishnakumar V."/>
            <person name="Chan A.P."/>
            <person name="Thibaud-Nissen F."/>
            <person name="Schobel S."/>
            <person name="Town C.D."/>
        </authorList>
    </citation>
    <scope>GENOME REANNOTATION</scope>
    <source>
        <strain>cv. Columbia</strain>
    </source>
</reference>
<reference key="5">
    <citation type="journal article" date="2003" name="Science">
        <title>Empirical analysis of transcriptional activity in the Arabidopsis genome.</title>
        <authorList>
            <person name="Yamada K."/>
            <person name="Lim J."/>
            <person name="Dale J.M."/>
            <person name="Chen H."/>
            <person name="Shinn P."/>
            <person name="Palm C.J."/>
            <person name="Southwick A.M."/>
            <person name="Wu H.C."/>
            <person name="Kim C.J."/>
            <person name="Nguyen M."/>
            <person name="Pham P.K."/>
            <person name="Cheuk R.F."/>
            <person name="Karlin-Newmann G."/>
            <person name="Liu S.X."/>
            <person name="Lam B."/>
            <person name="Sakano H."/>
            <person name="Wu T."/>
            <person name="Yu G."/>
            <person name="Miranda M."/>
            <person name="Quach H.L."/>
            <person name="Tripp M."/>
            <person name="Chang C.H."/>
            <person name="Lee J.M."/>
            <person name="Toriumi M.J."/>
            <person name="Chan M.M."/>
            <person name="Tang C.C."/>
            <person name="Onodera C.S."/>
            <person name="Deng J.M."/>
            <person name="Akiyama K."/>
            <person name="Ansari Y."/>
            <person name="Arakawa T."/>
            <person name="Banh J."/>
            <person name="Banno F."/>
            <person name="Bowser L."/>
            <person name="Brooks S.Y."/>
            <person name="Carninci P."/>
            <person name="Chao Q."/>
            <person name="Choy N."/>
            <person name="Enju A."/>
            <person name="Goldsmith A.D."/>
            <person name="Gurjal M."/>
            <person name="Hansen N.F."/>
            <person name="Hayashizaki Y."/>
            <person name="Johnson-Hopson C."/>
            <person name="Hsuan V.W."/>
            <person name="Iida K."/>
            <person name="Karnes M."/>
            <person name="Khan S."/>
            <person name="Koesema E."/>
            <person name="Ishida J."/>
            <person name="Jiang P.X."/>
            <person name="Jones T."/>
            <person name="Kawai J."/>
            <person name="Kamiya A."/>
            <person name="Meyers C."/>
            <person name="Nakajima M."/>
            <person name="Narusaka M."/>
            <person name="Seki M."/>
            <person name="Sakurai T."/>
            <person name="Satou M."/>
            <person name="Tamse R."/>
            <person name="Vaysberg M."/>
            <person name="Wallender E.K."/>
            <person name="Wong C."/>
            <person name="Yamamura Y."/>
            <person name="Yuan S."/>
            <person name="Shinozaki K."/>
            <person name="Davis R.W."/>
            <person name="Theologis A."/>
            <person name="Ecker J.R."/>
        </authorList>
    </citation>
    <scope>NUCLEOTIDE SEQUENCE [LARGE SCALE MRNA]</scope>
    <source>
        <strain>cv. Columbia</strain>
    </source>
</reference>
<reference key="6">
    <citation type="journal article" date="2001" name="J. Mol. Biol.">
        <title>Subcellular localization and oligomerization of the Arabidopsis thaliana somatic embryogenesis receptor kinase 1 protein.</title>
        <authorList>
            <person name="Shah K."/>
            <person name="Gadella T.W.J. Jr."/>
            <person name="van Erp H."/>
            <person name="Hecht V."/>
            <person name="de Vries S.C."/>
        </authorList>
    </citation>
    <scope>SUBCELLULAR LOCATION</scope>
    <scope>SUBUNIT</scope>
</reference>
<reference key="7">
    <citation type="journal article" date="2001" name="J. Biol. Chem.">
        <title>Role of threonines in the Arabidopsis thaliana somatic embryogenesis receptor kinase 1 activation loop in phosphorylation.</title>
        <authorList>
            <person name="Shah K."/>
            <person name="Vervoort J."/>
            <person name="de Vries S.C."/>
        </authorList>
    </citation>
    <scope>FUNCTION</scope>
    <scope>MUTAGENESIS OF LYS-330; THR-459; THR-462; THR-463 AND THR-468</scope>
    <scope>BIOPHYSICOCHEMICAL PROPERTIES</scope>
</reference>
<reference key="8">
    <citation type="journal article" date="2002" name="Genes Dev.">
        <title>The Arabidopsis kinase-associated protein phosphatase controls internalization of the somatic embryogenesis receptor kinase 1.</title>
        <authorList>
            <person name="Shah K."/>
            <person name="Russinova E."/>
            <person name="Gadella T.W. Jr."/>
            <person name="Willemse J."/>
            <person name="de Vries S.C."/>
        </authorList>
    </citation>
    <scope>INTERACTION WITH KAPP</scope>
    <scope>SUBUNIT</scope>
</reference>
<reference key="9">
    <citation type="journal article" date="2005" name="Plant Cell">
        <title>The Arabidopsis thaliana SOMATIC EMBRYOGENESIS RECEPTOR-LIKE KINASES1 and 2 control male sporogenesis.</title>
        <authorList>
            <person name="Albrecht C."/>
            <person name="Russinova E."/>
            <person name="Hecht V.F.G."/>
            <person name="Baaijens E."/>
            <person name="de Vries S."/>
        </authorList>
    </citation>
    <scope>INTERACTION WITH SERK2</scope>
    <scope>SUBUNIT</scope>
    <scope>TISSUE SPECIFICITY</scope>
    <scope>SUBCELLULAR LOCATION</scope>
    <scope>DISRUPTION PHENOTYPE</scope>
</reference>
<reference key="10">
    <citation type="journal article" date="2005" name="Planta">
        <title>The Arabidopsis SERK1 protein interacts with the AAA-ATPase AtCDC48, the 14-3-3 protein GF14lambda and the PP2C phosphatase KAPP.</title>
        <authorList>
            <person name="Rienties I.M."/>
            <person name="Vink J."/>
            <person name="Borst J.W."/>
            <person name="Russinova E."/>
            <person name="de Vries S.C."/>
        </authorList>
    </citation>
    <scope>INTERACTION WITH CDC48A; GRF6 AND KAPP</scope>
</reference>
<reference key="11">
    <citation type="journal article" date="2005" name="Protoplasma">
        <title>Arabidopsis thaliana somatic embryogenesis receptor kinase 1 protein is present in sporophytic and gametophytic cells and undergoes endocytosis.</title>
        <authorList>
            <person name="Kwaaitaal M.A.C.J."/>
            <person name="de Vries S.C."/>
            <person name="Russinova E."/>
        </authorList>
    </citation>
    <scope>SUBCELLULAR LOCATION</scope>
    <scope>DEVELOPMENTAL STAGE</scope>
    <scope>TISSUE SPECIFICITY</scope>
</reference>
<reference key="12">
    <citation type="journal article" date="2005" name="Plant Cell">
        <title>Arabidopsis SOMATIC EMBRYOGENESIS RECEPTOR KINASES1 and 2 are essential for tapetum development and microspore maturation.</title>
        <authorList>
            <person name="Colcombet J."/>
            <person name="Boisson-Dernier A."/>
            <person name="Ros-Palau R."/>
            <person name="Vera C.E."/>
            <person name="Schroeder J.I."/>
        </authorList>
    </citation>
    <scope>DISRUPTION PHENOTYPE</scope>
</reference>
<reference key="13">
    <citation type="journal article" date="2006" name="Plant Cell">
        <title>The Arabidopsis SOMATIC EMBRYOGENESIS RECEPTOR-LIKE KINASE1 protein complex includes BRASSINOSTEROID-INSENSITIVE1.</title>
        <authorList>
            <person name="Karlova R."/>
            <person name="Boeren S."/>
            <person name="Russinova E."/>
            <person name="Aker J."/>
            <person name="Vervoort J."/>
            <person name="de Vries S.C."/>
        </authorList>
    </citation>
    <scope>INTERACTION WITH BRI1; BAK1/SERK3; CDC48A; GRF7 AND KAPP</scope>
</reference>
<reference key="14">
    <citation type="journal article" date="2006" name="J. Struct. Biol.">
        <title>The Arabidopsis thaliana AAA protein CDC48A interacts in vivo with the somatic embryogenesis receptor-like kinase 1 receptor at the plasma membrane.</title>
        <authorList>
            <person name="Aker J."/>
            <person name="Borst J.W."/>
            <person name="Karlova R."/>
            <person name="de Vries S.C."/>
        </authorList>
    </citation>
    <scope>SUBCELLULAR LOCATION</scope>
    <scope>INTERACTION WITH CDC48A</scope>
</reference>
<reference key="15">
    <citation type="journal article" date="2007" name="Plant Physiol.">
        <title>In vivo hexamerization and characterization of the Arabidopsis AAA ATPase CDC48A complex using forster resonance energy transfer-fluorescence lifetime imaging microscopy and fluorescence correlation spectroscopy.</title>
        <authorList>
            <person name="Aker J."/>
            <person name="Hesselink R."/>
            <person name="Engel R."/>
            <person name="Karlova R."/>
            <person name="Borst J.W."/>
            <person name="Visser A.J.W.G."/>
            <person name="de Vries S.C."/>
        </authorList>
    </citation>
    <scope>FUNCTION</scope>
    <scope>INTERACTION WITH CDC48A</scope>
</reference>
<reference key="16">
    <citation type="journal article" date="2008" name="Biophys. J.">
        <title>Fluorescence fluctuation analysis of Arabidopsis thaliana somatic embryogenesis receptor-like kinase and brassinosteroid insensitive 1 receptor oligomerization.</title>
        <authorList>
            <person name="Hink M.A."/>
            <person name="Shah K."/>
            <person name="Russinova E."/>
            <person name="de Vries S.C."/>
            <person name="Visser A.J."/>
        </authorList>
    </citation>
    <scope>SUBUNIT</scope>
</reference>
<reference key="17">
    <citation type="journal article" date="2008" name="Plant Physiol. Biochem.">
        <title>AtSERK1 expression precedes and coincides with early somatic embryogenesis in Arabidopsis thaliana.</title>
        <authorList>
            <person name="Salaj J."/>
            <person name="von Recklinghausen I.R."/>
            <person name="Hecht V."/>
            <person name="de Vries S.C."/>
            <person name="Schel J.H.N."/>
            <person name="van Lammeren A.A.M."/>
        </authorList>
    </citation>
    <scope>DEVELOPMENTAL STAGE</scope>
    <scope>TISSUE SPECIFICITY</scope>
</reference>
<reference key="18">
    <citation type="journal article" date="2009" name="Proteomics">
        <title>Identification of in vitro phosphorylation sites in the Arabidopsis thaliana somatic embryogenesis receptor-like kinases.</title>
        <authorList>
            <person name="Karlova R."/>
            <person name="Boeren S."/>
            <person name="van Dongen W."/>
            <person name="Kwaaitaal M."/>
            <person name="Aker J."/>
            <person name="Vervoort J."/>
            <person name="de Vries S.C."/>
        </authorList>
    </citation>
    <scope>MUTAGENESIS OF THR-541; SER-562 AND SER-570</scope>
    <scope>PHOSPHORYLATION AT SER-291; SER-299; SER-303; THR-325; THR-337; THR-346; SER-352; SER-383; SER-394; THR-402; SER-415; TYR-456; THR-459; THR-462; THR-463; THR-468; TYR-476; SER-478; THR-479; SER-483; THR-541; TYR-543; THR-559; SER-606; SER-612; THR-613; TYR-614 AND SER-622</scope>
</reference>
<reference key="19">
    <citation type="journal article" date="2011" name="Plant Cell">
        <title>The Arabidopsis leucine-rich repeat receptor-like kinases BAK1/SERK3 and BKK1/SERK4 are required for innate immunity to hemibiotrophic and biotrophic pathogens.</title>
        <authorList>
            <person name="Roux M."/>
            <person name="Schwessinger B."/>
            <person name="Albrecht C."/>
            <person name="Chinchilla D."/>
            <person name="Jones A."/>
            <person name="Holton N."/>
            <person name="Malinovsky F.G."/>
            <person name="Tor M."/>
            <person name="de Vries S."/>
            <person name="Zipfel C."/>
        </authorList>
    </citation>
    <scope>INTERACTION WITH EFR AND FLS2</scope>
    <source>
        <strain>cv. Columbia</strain>
    </source>
</reference>
<reference key="20">
    <citation type="journal article" date="2015" name="Curr. Biol.">
        <title>Differential function of Arabidopsis SERK family receptor-like kinases in stomatal patterning.</title>
        <authorList>
            <person name="Meng X."/>
            <person name="Chen X."/>
            <person name="Mang H."/>
            <person name="Liu C."/>
            <person name="Yu X."/>
            <person name="Gao X."/>
            <person name="Torii K.U."/>
            <person name="He P."/>
            <person name="Shan L."/>
        </authorList>
    </citation>
    <scope>INTERACTION WITH ERECTA; ERL1 AND TMM</scope>
</reference>
<reference key="21">
    <citation type="journal article" date="2016" name="Cell Res.">
        <title>Signature motif-guided identification of receptors for peptide hormones essential for root meristem growth.</title>
        <authorList>
            <person name="Song W."/>
            <person name="Liu L."/>
            <person name="Wang J."/>
            <person name="Wu Z."/>
            <person name="Zhang H."/>
            <person name="Tang J."/>
            <person name="Lin G."/>
            <person name="Wang Y."/>
            <person name="Wen X."/>
            <person name="Li W."/>
            <person name="Han Z."/>
            <person name="Guo H."/>
            <person name="Chai J."/>
        </authorList>
    </citation>
    <scope>FUNCTION</scope>
    <scope>INTERACTION WITH RGI1/RGFR4/RCH2; RGI2/RGFR3/RCH1; RGI3/RGFR1; RGI4/RGFR2/SKM2 AND RGI5/RGFR5</scope>
    <source>
        <strain>cv. Columbia</strain>
    </source>
</reference>
<reference key="22">
    <citation type="journal article" date="2013" name="Science">
        <title>Molecular mechanism for plant steroid receptor activation by somatic embryogenesis co-receptor kinases.</title>
        <authorList>
            <person name="Santiago J."/>
            <person name="Henzler C."/>
            <person name="Hothorn M."/>
        </authorList>
    </citation>
    <scope>X-RAY CRYSTALLOGRAPHY (1.53 ANGSTROMS) OF 24-213 IN COMPLEX WITH BRASSINOLIDE AND BRI1</scope>
    <scope>INTERACTION WITH BRI1</scope>
    <scope>GLYCOSYLATION AT ASN-104; ASN-150; ASN-163 AND ASN-184</scope>
    <scope>DISULFIDE BONDS</scope>
</reference>
<reference key="23">
    <citation type="journal article" date="2015" name="Nature">
        <title>Allosteric receptor activation by the plant peptide hormone phytosulfokine.</title>
        <authorList>
            <person name="Wang J."/>
            <person name="Li H."/>
            <person name="Han Z."/>
            <person name="Zhang H."/>
            <person name="Wang T."/>
            <person name="Lin G."/>
            <person name="Chang J."/>
            <person name="Yang W."/>
            <person name="Chai J."/>
        </authorList>
    </citation>
    <scope>X-RAY CRYSTALLOGRAPHY (2.66 ANGSTROMS) OF 1-213</scope>
    <scope>FUNCTION</scope>
    <scope>GLYCOSYLATION AT ASN-150</scope>
    <scope>DISULFIDE BONDS</scope>
    <scope>INTERACTION WITH PSKR1</scope>
</reference>
<reference key="24">
    <citation type="journal article" date="2016" name="Elife">
        <title>Mechanistic insight into a peptide hormone signaling complex mediating floral organ abscission.</title>
        <authorList>
            <person name="Santiago J."/>
            <person name="Brandt B."/>
            <person name="Wildhagen M."/>
            <person name="Hohmann U."/>
            <person name="Hothorn L.A."/>
            <person name="Butenko M.A."/>
            <person name="Hothorn M."/>
        </authorList>
    </citation>
    <scope>X-RAY CRYSTALLOGRAPHY (2.43 ANGSTROMS) OF 24-213</scope>
    <scope>FUNCTION</scope>
    <scope>DISRUPTION PHENOTYPE</scope>
    <scope>GLYCOSYLATION AT ASN-150 AND ASN-184</scope>
    <scope>DISULFIDE BONDS</scope>
</reference>
<reference key="25">
    <citation type="journal article" date="2018" name="Nat. Plants">
        <title>The SERK3 elongated allele defines a role for BIR ectodomains in brassinosteroid signalling.</title>
        <authorList>
            <person name="Hohmann U."/>
            <person name="Nicolet J."/>
            <person name="Moretti A."/>
            <person name="Hothorn L.A."/>
            <person name="Hothorn M."/>
        </authorList>
    </citation>
    <scope>X-RAY CRYSTALLOGRAPHY (1.25 ANGSTROMS) OF 24-208</scope>
    <scope>DISULFIDE BONDS</scope>
</reference>
<sequence>MESSYVVFILLSLILLPNHSLWLASANLEGDALHTLRVTLVDPNNVLQSWDPTLVNPCTWFHVTCNNENSVIRVDLGNAELSGHLVPELGVLKNLQYLELYSNNITGPIPSNLGNLTNLVSLDLYLNSFSGPIPESLGKLSKLRFLRLNNNSLTGSIPMSLTNITTLQVLDLSNNRLSGSVPDNGSFSLFTPISFANNLDLCGPVTSHPCPGSPPFSPPPPFIQPPPVSTPSGYGITGAIAGGVAAGAALLFAAPAIAFAWWRRRKPLDIFFDVPAEEDPEVHLGQLKRFSLRELQVASDGFSNKNILGRGGFGKVYKGRLADGTLVAVKRLKEERTPGGELQFQTEVEMISMAVHRNLLRLRGFCMTPTERLLVYPYMANGSVASCLRERPPSQPPLDWPTRKRIALGSARGLSYLHDHCDPKIIHRDVKAANILLDEEFEAVVGDFGLAKLMDYKDTHVTTAVRGTIGHIAPEYLSTGKSSEKTDVFGYGIMLLELITGQRAFDLARLANDDDVMLLDWVKGLLKEKKLEMLVDPDLQTNYEERELEQVIQVALLCTQGSPMERPKMSEVVRMLEGDGLAEKWDEWQKVEILREEIDLSPNPNSDWILDSTYNLHAVELSGPR</sequence>
<protein>
    <recommendedName>
        <fullName evidence="27">Somatic embryogenesis receptor kinase 1</fullName>
        <shortName evidence="27">AtSERK1</shortName>
        <ecNumber evidence="5">2.7.10.1</ecNumber>
        <ecNumber evidence="3">2.7.11.1</ecNumber>
    </recommendedName>
    <alternativeName>
        <fullName evidence="27">Somatic embryogenesis receptor-like kinase 1</fullName>
    </alternativeName>
</protein>
<organism>
    <name type="scientific">Arabidopsis thaliana</name>
    <name type="common">Mouse-ear cress</name>
    <dbReference type="NCBI Taxonomy" id="3702"/>
    <lineage>
        <taxon>Eukaryota</taxon>
        <taxon>Viridiplantae</taxon>
        <taxon>Streptophyta</taxon>
        <taxon>Embryophyta</taxon>
        <taxon>Tracheophyta</taxon>
        <taxon>Spermatophyta</taxon>
        <taxon>Magnoliopsida</taxon>
        <taxon>eudicotyledons</taxon>
        <taxon>Gunneridae</taxon>
        <taxon>Pentapetalae</taxon>
        <taxon>rosids</taxon>
        <taxon>malvids</taxon>
        <taxon>Brassicales</taxon>
        <taxon>Brassicaceae</taxon>
        <taxon>Camelineae</taxon>
        <taxon>Arabidopsis</taxon>
    </lineage>
</organism>
<evidence type="ECO:0000250" key="1">
    <source>
        <dbReference type="UniProtKB" id="Q9LSI9"/>
    </source>
</evidence>
<evidence type="ECO:0000255" key="2"/>
<evidence type="ECO:0000255" key="3">
    <source>
        <dbReference type="PROSITE-ProRule" id="PRU00159"/>
    </source>
</evidence>
<evidence type="ECO:0000255" key="4">
    <source>
        <dbReference type="PROSITE-ProRule" id="PRU00498"/>
    </source>
</evidence>
<evidence type="ECO:0000255" key="5">
    <source>
        <dbReference type="PROSITE-ProRule" id="PRU10027"/>
    </source>
</evidence>
<evidence type="ECO:0000269" key="6">
    <source>
    </source>
</evidence>
<evidence type="ECO:0000269" key="7">
    <source>
    </source>
</evidence>
<evidence type="ECO:0000269" key="8">
    <source>
    </source>
</evidence>
<evidence type="ECO:0000269" key="9">
    <source>
    </source>
</evidence>
<evidence type="ECO:0000269" key="10">
    <source>
    </source>
</evidence>
<evidence type="ECO:0000269" key="11">
    <source>
    </source>
</evidence>
<evidence type="ECO:0000269" key="12">
    <source>
    </source>
</evidence>
<evidence type="ECO:0000269" key="13">
    <source>
    </source>
</evidence>
<evidence type="ECO:0000269" key="14">
    <source>
    </source>
</evidence>
<evidence type="ECO:0000269" key="15">
    <source>
    </source>
</evidence>
<evidence type="ECO:0000269" key="16">
    <source>
    </source>
</evidence>
<evidence type="ECO:0000269" key="17">
    <source>
    </source>
</evidence>
<evidence type="ECO:0000269" key="18">
    <source>
    </source>
</evidence>
<evidence type="ECO:0000269" key="19">
    <source>
    </source>
</evidence>
<evidence type="ECO:0000269" key="20">
    <source>
    </source>
</evidence>
<evidence type="ECO:0000269" key="21">
    <source>
    </source>
</evidence>
<evidence type="ECO:0000269" key="22">
    <source>
    </source>
</evidence>
<evidence type="ECO:0000269" key="23">
    <source>
    </source>
</evidence>
<evidence type="ECO:0000269" key="24">
    <source>
    </source>
</evidence>
<evidence type="ECO:0000269" key="25">
    <source>
    </source>
</evidence>
<evidence type="ECO:0000269" key="26">
    <source>
    </source>
</evidence>
<evidence type="ECO:0000303" key="27">
    <source>
    </source>
</evidence>
<evidence type="ECO:0000305" key="28"/>
<evidence type="ECO:0000305" key="29">
    <source>
    </source>
</evidence>
<evidence type="ECO:0000312" key="30">
    <source>
        <dbReference type="Araport" id="AT1G71830"/>
    </source>
</evidence>
<evidence type="ECO:0000312" key="31">
    <source>
        <dbReference type="EMBL" id="AAF43236.1"/>
    </source>
</evidence>
<evidence type="ECO:0007744" key="32">
    <source>
        <dbReference type="PDB" id="4LSC"/>
    </source>
</evidence>
<evidence type="ECO:0007744" key="33">
    <source>
        <dbReference type="PDB" id="4LSX"/>
    </source>
</evidence>
<evidence type="ECO:0007744" key="34">
    <source>
        <dbReference type="PDB" id="4Z64"/>
    </source>
</evidence>
<evidence type="ECO:0007744" key="35">
    <source>
        <dbReference type="PDB" id="5IYX"/>
    </source>
</evidence>
<evidence type="ECO:0007744" key="36">
    <source>
        <dbReference type="PDB" id="6FG8"/>
    </source>
</evidence>
<evidence type="ECO:0007829" key="37">
    <source>
        <dbReference type="PDB" id="5IYX"/>
    </source>
</evidence>
<evidence type="ECO:0007829" key="38">
    <source>
        <dbReference type="PDB" id="6FG8"/>
    </source>
</evidence>
<gene>
    <name evidence="27" type="primary">SERK1</name>
    <name evidence="30" type="ordered locus">At1g71830</name>
    <name evidence="31" type="ORF">F14O23.21</name>
    <name evidence="31" type="ORF">F14O23_24</name>
</gene>
<dbReference type="EC" id="2.7.10.1" evidence="5"/>
<dbReference type="EC" id="2.7.11.1" evidence="3"/>
<dbReference type="EMBL" id="A67827">
    <property type="protein sequence ID" value="CAB42254.1"/>
    <property type="molecule type" value="Unassigned_DNA"/>
</dbReference>
<dbReference type="EMBL" id="A67815">
    <property type="status" value="NOT_ANNOTATED_CDS"/>
    <property type="molecule type" value="Unassigned_DNA"/>
</dbReference>
<dbReference type="EMBL" id="FJ708676">
    <property type="protein sequence ID" value="ACN59271.1"/>
    <property type="molecule type" value="mRNA"/>
</dbReference>
<dbReference type="EMBL" id="AC012654">
    <property type="protein sequence ID" value="AAF43236.1"/>
    <property type="status" value="ALT_SEQ"/>
    <property type="molecule type" value="Genomic_DNA"/>
</dbReference>
<dbReference type="EMBL" id="CP002684">
    <property type="protein sequence ID" value="AEE35238.1"/>
    <property type="molecule type" value="Genomic_DNA"/>
</dbReference>
<dbReference type="EMBL" id="AY048200">
    <property type="protein sequence ID" value="AAK82463.1"/>
    <property type="molecule type" value="mRNA"/>
</dbReference>
<dbReference type="EMBL" id="BT002217">
    <property type="protein sequence ID" value="AAN72307.1"/>
    <property type="molecule type" value="mRNA"/>
</dbReference>
<dbReference type="PIR" id="H96740">
    <property type="entry name" value="H96740"/>
</dbReference>
<dbReference type="RefSeq" id="NP_177328.1">
    <property type="nucleotide sequence ID" value="NM_105841.4"/>
</dbReference>
<dbReference type="PDB" id="4LSC">
    <property type="method" value="X-ray"/>
    <property type="resolution" value="1.53 A"/>
    <property type="chains" value="A=24-213"/>
</dbReference>
<dbReference type="PDB" id="4LSX">
    <property type="method" value="X-ray"/>
    <property type="resolution" value="3.30 A"/>
    <property type="chains" value="C/D=24-213"/>
</dbReference>
<dbReference type="PDB" id="4Z64">
    <property type="method" value="X-ray"/>
    <property type="resolution" value="2.66 A"/>
    <property type="chains" value="C=1-213"/>
</dbReference>
<dbReference type="PDB" id="5IYX">
    <property type="method" value="X-ray"/>
    <property type="resolution" value="2.43 A"/>
    <property type="chains" value="C=24-213"/>
</dbReference>
<dbReference type="PDB" id="6FG8">
    <property type="method" value="X-ray"/>
    <property type="resolution" value="1.25 A"/>
    <property type="chains" value="A=24-208"/>
</dbReference>
<dbReference type="PDB" id="7ODV">
    <property type="method" value="X-ray"/>
    <property type="resolution" value="2.31 A"/>
    <property type="chains" value="BBB/EEE=24-211"/>
</dbReference>
<dbReference type="PDB" id="7OGO">
    <property type="method" value="X-ray"/>
    <property type="resolution" value="2.38 A"/>
    <property type="chains" value="BBB/EEE=24-211"/>
</dbReference>
<dbReference type="PDB" id="7OGQ">
    <property type="method" value="X-ray"/>
    <property type="resolution" value="2.20 A"/>
    <property type="chains" value="BBB=24-211"/>
</dbReference>
<dbReference type="PDB" id="7OGU">
    <property type="method" value="X-ray"/>
    <property type="resolution" value="2.87 A"/>
    <property type="chains" value="BBB/EEE/HHH/KKK=24-211"/>
</dbReference>
<dbReference type="PDB" id="7OGZ">
    <property type="method" value="X-ray"/>
    <property type="resolution" value="2.70 A"/>
    <property type="chains" value="BBB/EEE=24-213"/>
</dbReference>
<dbReference type="PDBsum" id="4LSC"/>
<dbReference type="PDBsum" id="4LSX"/>
<dbReference type="PDBsum" id="4Z64"/>
<dbReference type="PDBsum" id="5IYX"/>
<dbReference type="PDBsum" id="6FG8"/>
<dbReference type="PDBsum" id="7ODV"/>
<dbReference type="PDBsum" id="7OGO"/>
<dbReference type="PDBsum" id="7OGQ"/>
<dbReference type="PDBsum" id="7OGU"/>
<dbReference type="PDBsum" id="7OGZ"/>
<dbReference type="SMR" id="Q94AG2"/>
<dbReference type="BioGRID" id="28733">
    <property type="interactions" value="30"/>
</dbReference>
<dbReference type="DIP" id="DIP-38028N"/>
<dbReference type="FunCoup" id="Q94AG2">
    <property type="interactions" value="259"/>
</dbReference>
<dbReference type="IntAct" id="Q94AG2">
    <property type="interactions" value="34"/>
</dbReference>
<dbReference type="STRING" id="3702.Q94AG2"/>
<dbReference type="GlyCosmos" id="Q94AG2">
    <property type="glycosylation" value="5 sites, No reported glycans"/>
</dbReference>
<dbReference type="GlyGen" id="Q94AG2">
    <property type="glycosylation" value="6 sites"/>
</dbReference>
<dbReference type="iPTMnet" id="Q94AG2"/>
<dbReference type="PaxDb" id="3702-AT1G71830.1"/>
<dbReference type="ProteomicsDB" id="232575"/>
<dbReference type="EnsemblPlants" id="AT1G71830.1">
    <property type="protein sequence ID" value="AT1G71830.1"/>
    <property type="gene ID" value="AT1G71830"/>
</dbReference>
<dbReference type="GeneID" id="843513"/>
<dbReference type="Gramene" id="AT1G71830.1">
    <property type="protein sequence ID" value="AT1G71830.1"/>
    <property type="gene ID" value="AT1G71830"/>
</dbReference>
<dbReference type="KEGG" id="ath:AT1G71830"/>
<dbReference type="Araport" id="AT1G71830"/>
<dbReference type="TAIR" id="AT1G71830">
    <property type="gene designation" value="SERK1"/>
</dbReference>
<dbReference type="eggNOG" id="ENOG502QQ7B">
    <property type="taxonomic scope" value="Eukaryota"/>
</dbReference>
<dbReference type="HOGENOM" id="CLU_000288_92_7_1"/>
<dbReference type="InParanoid" id="Q94AG2"/>
<dbReference type="OMA" id="TIHVAFI"/>
<dbReference type="OrthoDB" id="4062651at2759"/>
<dbReference type="PhylomeDB" id="Q94AG2"/>
<dbReference type="SABIO-RK" id="Q94AG2"/>
<dbReference type="EvolutionaryTrace" id="Q94AG2"/>
<dbReference type="PRO" id="PR:Q94AG2"/>
<dbReference type="Proteomes" id="UP000006548">
    <property type="component" value="Chromosome 1"/>
</dbReference>
<dbReference type="ExpressionAtlas" id="Q94AG2">
    <property type="expression patterns" value="baseline and differential"/>
</dbReference>
<dbReference type="GO" id="GO:0005789">
    <property type="term" value="C:endoplasmic reticulum membrane"/>
    <property type="evidence" value="ECO:0007669"/>
    <property type="project" value="UniProtKB-SubCell"/>
</dbReference>
<dbReference type="GO" id="GO:0005739">
    <property type="term" value="C:mitochondrion"/>
    <property type="evidence" value="ECO:0007005"/>
    <property type="project" value="TAIR"/>
</dbReference>
<dbReference type="GO" id="GO:0005886">
    <property type="term" value="C:plasma membrane"/>
    <property type="evidence" value="ECO:0000314"/>
    <property type="project" value="UniProtKB"/>
</dbReference>
<dbReference type="GO" id="GO:0032991">
    <property type="term" value="C:protein-containing complex"/>
    <property type="evidence" value="ECO:0000353"/>
    <property type="project" value="TAIR"/>
</dbReference>
<dbReference type="GO" id="GO:0005524">
    <property type="term" value="F:ATP binding"/>
    <property type="evidence" value="ECO:0007669"/>
    <property type="project" value="UniProtKB-KW"/>
</dbReference>
<dbReference type="GO" id="GO:0042802">
    <property type="term" value="F:identical protein binding"/>
    <property type="evidence" value="ECO:0000353"/>
    <property type="project" value="IntAct"/>
</dbReference>
<dbReference type="GO" id="GO:0106310">
    <property type="term" value="F:protein serine kinase activity"/>
    <property type="evidence" value="ECO:0007669"/>
    <property type="project" value="RHEA"/>
</dbReference>
<dbReference type="GO" id="GO:0033612">
    <property type="term" value="F:receptor serine/threonine kinase binding"/>
    <property type="evidence" value="ECO:0000353"/>
    <property type="project" value="UniProtKB"/>
</dbReference>
<dbReference type="GO" id="GO:0005102">
    <property type="term" value="F:signaling receptor binding"/>
    <property type="evidence" value="ECO:0000353"/>
    <property type="project" value="UniProtKB"/>
</dbReference>
<dbReference type="GO" id="GO:0004675">
    <property type="term" value="F:transmembrane receptor protein serine/threonine kinase activity"/>
    <property type="evidence" value="ECO:0000314"/>
    <property type="project" value="TAIR"/>
</dbReference>
<dbReference type="GO" id="GO:0004714">
    <property type="term" value="F:transmembrane receptor protein tyrosine kinase activity"/>
    <property type="evidence" value="ECO:0007669"/>
    <property type="project" value="UniProtKB-EC"/>
</dbReference>
<dbReference type="GO" id="GO:0009742">
    <property type="term" value="P:brassinosteroid mediated signaling pathway"/>
    <property type="evidence" value="ECO:0000315"/>
    <property type="project" value="TAIR"/>
</dbReference>
<dbReference type="GO" id="GO:0009793">
    <property type="term" value="P:embryo development ending in seed dormancy"/>
    <property type="evidence" value="ECO:0000315"/>
    <property type="project" value="TAIR"/>
</dbReference>
<dbReference type="GO" id="GO:0010227">
    <property type="term" value="P:floral organ abscission"/>
    <property type="evidence" value="ECO:0000316"/>
    <property type="project" value="TAIR"/>
</dbReference>
<dbReference type="GO" id="GO:0007030">
    <property type="term" value="P:Golgi organization"/>
    <property type="evidence" value="ECO:0000316"/>
    <property type="project" value="TAIR"/>
</dbReference>
<dbReference type="GO" id="GO:0009556">
    <property type="term" value="P:microsporogenesis"/>
    <property type="evidence" value="ECO:0000315"/>
    <property type="project" value="TAIR"/>
</dbReference>
<dbReference type="GO" id="GO:0010152">
    <property type="term" value="P:pollen maturation"/>
    <property type="evidence" value="ECO:0000315"/>
    <property type="project" value="TAIR"/>
</dbReference>
<dbReference type="GO" id="GO:0046777">
    <property type="term" value="P:protein autophosphorylation"/>
    <property type="evidence" value="ECO:0000304"/>
    <property type="project" value="TAIR"/>
</dbReference>
<dbReference type="GO" id="GO:0006468">
    <property type="term" value="P:protein phosphorylation"/>
    <property type="evidence" value="ECO:0000314"/>
    <property type="project" value="TAIR"/>
</dbReference>
<dbReference type="CDD" id="cd14664">
    <property type="entry name" value="STK_BAK1_like"/>
    <property type="match status" value="1"/>
</dbReference>
<dbReference type="FunFam" id="3.30.200.20:FF:000015">
    <property type="entry name" value="Somatic embryogenesis receptor kinase 1"/>
    <property type="match status" value="1"/>
</dbReference>
<dbReference type="FunFam" id="3.80.10.10:FF:000024">
    <property type="entry name" value="Somatic embryogenesis receptor kinase 1"/>
    <property type="match status" value="1"/>
</dbReference>
<dbReference type="FunFam" id="1.10.510.10:FF:000016">
    <property type="entry name" value="Somatic embryogenesis receptor-like kinase 1"/>
    <property type="match status" value="1"/>
</dbReference>
<dbReference type="Gene3D" id="3.30.200.20">
    <property type="entry name" value="Phosphorylase Kinase, domain 1"/>
    <property type="match status" value="1"/>
</dbReference>
<dbReference type="Gene3D" id="3.80.10.10">
    <property type="entry name" value="Ribonuclease Inhibitor"/>
    <property type="match status" value="1"/>
</dbReference>
<dbReference type="Gene3D" id="1.10.510.10">
    <property type="entry name" value="Transferase(Phosphotransferase) domain 1"/>
    <property type="match status" value="1"/>
</dbReference>
<dbReference type="InterPro" id="IPR011009">
    <property type="entry name" value="Kinase-like_dom_sf"/>
</dbReference>
<dbReference type="InterPro" id="IPR001611">
    <property type="entry name" value="Leu-rich_rpt"/>
</dbReference>
<dbReference type="InterPro" id="IPR032675">
    <property type="entry name" value="LRR_dom_sf"/>
</dbReference>
<dbReference type="InterPro" id="IPR013210">
    <property type="entry name" value="LRR_N_plant-typ"/>
</dbReference>
<dbReference type="InterPro" id="IPR000719">
    <property type="entry name" value="Prot_kinase_dom"/>
</dbReference>
<dbReference type="InterPro" id="IPR017441">
    <property type="entry name" value="Protein_kinase_ATP_BS"/>
</dbReference>
<dbReference type="InterPro" id="IPR001245">
    <property type="entry name" value="Ser-Thr/Tyr_kinase_cat_dom"/>
</dbReference>
<dbReference type="InterPro" id="IPR008271">
    <property type="entry name" value="Ser/Thr_kinase_AS"/>
</dbReference>
<dbReference type="PANTHER" id="PTHR47988">
    <property type="entry name" value="SOMATIC EMBRYOGENESIS RECEPTOR KINASE 1"/>
    <property type="match status" value="1"/>
</dbReference>
<dbReference type="Pfam" id="PF00560">
    <property type="entry name" value="LRR_1"/>
    <property type="match status" value="4"/>
</dbReference>
<dbReference type="Pfam" id="PF08263">
    <property type="entry name" value="LRRNT_2"/>
    <property type="match status" value="1"/>
</dbReference>
<dbReference type="Pfam" id="PF07714">
    <property type="entry name" value="PK_Tyr_Ser-Thr"/>
    <property type="match status" value="1"/>
</dbReference>
<dbReference type="SMART" id="SM00220">
    <property type="entry name" value="S_TKc"/>
    <property type="match status" value="1"/>
</dbReference>
<dbReference type="SUPFAM" id="SSF52058">
    <property type="entry name" value="L domain-like"/>
    <property type="match status" value="1"/>
</dbReference>
<dbReference type="SUPFAM" id="SSF56112">
    <property type="entry name" value="Protein kinase-like (PK-like)"/>
    <property type="match status" value="1"/>
</dbReference>
<dbReference type="PROSITE" id="PS00107">
    <property type="entry name" value="PROTEIN_KINASE_ATP"/>
    <property type="match status" value="1"/>
</dbReference>
<dbReference type="PROSITE" id="PS50011">
    <property type="entry name" value="PROTEIN_KINASE_DOM"/>
    <property type="match status" value="1"/>
</dbReference>
<dbReference type="PROSITE" id="PS00108">
    <property type="entry name" value="PROTEIN_KINASE_ST"/>
    <property type="match status" value="1"/>
</dbReference>
<name>SERK1_ARATH</name>
<comment type="function">
    <text evidence="7 16 22 24 29">Dual specificity kinase acting on both serine/threonine- and tyrosine-containing substrates. Phosphorylates BRI1 on 'Ser-887' and CDC48 on at least one threonine residue and on 'Ser-41'. Confers embryogenic competence. Acts redundantly with SERK2 as a control point for sporophytic development controlling male gametophyte production. Involved in the brassinolide signaling pathway. Probably required during small peptide (e.g. RGF1) signaling (Probable). Involved in the perception of phytosulfokine and subsequent signal transduction (PubMed:26308901). Acts as a RLK5 coreceptor and promotes high-affinity IDA sensing, thus being a positive regulator of floral abscission (PubMed:27058169).</text>
</comment>
<comment type="catalytic activity">
    <reaction evidence="3">
        <text>L-seryl-[protein] + ATP = O-phospho-L-seryl-[protein] + ADP + H(+)</text>
        <dbReference type="Rhea" id="RHEA:17989"/>
        <dbReference type="Rhea" id="RHEA-COMP:9863"/>
        <dbReference type="Rhea" id="RHEA-COMP:11604"/>
        <dbReference type="ChEBI" id="CHEBI:15378"/>
        <dbReference type="ChEBI" id="CHEBI:29999"/>
        <dbReference type="ChEBI" id="CHEBI:30616"/>
        <dbReference type="ChEBI" id="CHEBI:83421"/>
        <dbReference type="ChEBI" id="CHEBI:456216"/>
        <dbReference type="EC" id="2.7.11.1"/>
    </reaction>
</comment>
<comment type="catalytic activity">
    <reaction evidence="3">
        <text>L-threonyl-[protein] + ATP = O-phospho-L-threonyl-[protein] + ADP + H(+)</text>
        <dbReference type="Rhea" id="RHEA:46608"/>
        <dbReference type="Rhea" id="RHEA-COMP:11060"/>
        <dbReference type="Rhea" id="RHEA-COMP:11605"/>
        <dbReference type="ChEBI" id="CHEBI:15378"/>
        <dbReference type="ChEBI" id="CHEBI:30013"/>
        <dbReference type="ChEBI" id="CHEBI:30616"/>
        <dbReference type="ChEBI" id="CHEBI:61977"/>
        <dbReference type="ChEBI" id="CHEBI:456216"/>
        <dbReference type="EC" id="2.7.11.1"/>
    </reaction>
</comment>
<comment type="catalytic activity">
    <reaction evidence="5">
        <text>L-tyrosyl-[protein] + ATP = O-phospho-L-tyrosyl-[protein] + ADP + H(+)</text>
        <dbReference type="Rhea" id="RHEA:10596"/>
        <dbReference type="Rhea" id="RHEA-COMP:10136"/>
        <dbReference type="Rhea" id="RHEA-COMP:20101"/>
        <dbReference type="ChEBI" id="CHEBI:15378"/>
        <dbReference type="ChEBI" id="CHEBI:30616"/>
        <dbReference type="ChEBI" id="CHEBI:46858"/>
        <dbReference type="ChEBI" id="CHEBI:61978"/>
        <dbReference type="ChEBI" id="CHEBI:456216"/>
        <dbReference type="EC" id="2.7.10.1"/>
    </reaction>
</comment>
<comment type="cofactor">
    <cofactor>
        <name>Mg(2+)</name>
        <dbReference type="ChEBI" id="CHEBI:18420"/>
    </cofactor>
</comment>
<comment type="activity regulation">
    <text>Inhibited by manganese.</text>
</comment>
<comment type="biophysicochemical properties">
    <kinetics>
        <KM evidence="7">4 uM for ATP</KM>
    </kinetics>
</comment>
<comment type="subunit">
    <text evidence="6 9 10 12 14 15 16 17 20 21 22 23 25">Monomer, homo- and heterodimer. Interacts with KAPP, CDC48A, GRF6 or GRF7, SERK2, BRI1 and SERK3/BAK1 to form the SERK1 signaling complex. Bind to BRI1 in a brassinolide-dependent manner (PubMed:23929946). Heterodimer with PSKR1 (PubMed:26308901). Interacts with the EF-Tu receptor EFR and FLS2 in a specific ligand-induced manner. Interacts with ERECTA in a EPF2-induced manner. Interacts with ERL1 in a EPF1-induced manner. Interacts with TMM (PubMed:26320950). In the presence of the signal peptide RGF1, interacts with RGI1/RGFR4/RCH2, RGI2/RGFR3/RCH1, RGI3/RGFR1, RGI4/RGFR2/SKM2 and RGI5/RGFR5 (PubMed:27229311).</text>
</comment>
<comment type="interaction">
    <interactant intactId="EBI-1555537">
        <id>Q94AG2</id>
    </interactant>
    <interactant intactId="EBI-16902452">
        <id>Q8VYT3</id>
        <label>At4g30520</label>
    </interactant>
    <organismsDiffer>false</organismsDiffer>
    <experiments>2</experiments>
</comment>
<comment type="interaction">
    <interactant intactId="EBI-1555537">
        <id>Q94AG2</id>
    </interactant>
    <interactant intactId="EBI-6298290">
        <id>Q9ASS4</id>
        <label>At5g48380</label>
    </interactant>
    <organismsDiffer>false</organismsDiffer>
    <experiments>2</experiments>
</comment>
<comment type="interaction">
    <interactant intactId="EBI-1555537">
        <id>Q94AG2</id>
    </interactant>
    <interactant intactId="EBI-20653513">
        <id>Q9FN93</id>
        <label>At5g59680</label>
    </interactant>
    <organismsDiffer>false</organismsDiffer>
    <experiments>2</experiments>
</comment>
<comment type="interaction">
    <interactant intactId="EBI-1555537">
        <id>Q94AG2</id>
    </interactant>
    <interactant intactId="EBI-617138">
        <id>Q94F62</id>
        <label>BAK1</label>
    </interactant>
    <organismsDiffer>false</organismsDiffer>
    <experiments>6</experiments>
</comment>
<comment type="interaction">
    <interactant intactId="EBI-1555537">
        <id>Q94AG2</id>
    </interactant>
    <interactant intactId="EBI-1797828">
        <id>O22476</id>
        <label>BRI1</label>
    </interactant>
    <organismsDiffer>false</organismsDiffer>
    <experiments>7</experiments>
</comment>
<comment type="interaction">
    <interactant intactId="EBI-1555537">
        <id>Q94AG2</id>
    </interactant>
    <interactant intactId="EBI-1563238">
        <id>P54609</id>
        <label>CDC48A</label>
    </interactant>
    <organismsDiffer>false</organismsDiffer>
    <experiments>12</experiments>
</comment>
<comment type="interaction">
    <interactant intactId="EBI-1555537">
        <id>Q94AG2</id>
    </interactant>
    <interactant intactId="EBI-16895926">
        <id>Q6XAT2</id>
        <label>ERL2</label>
    </interactant>
    <organismsDiffer>false</organismsDiffer>
    <experiments>4</experiments>
</comment>
<comment type="interaction">
    <interactant intactId="EBI-1555537">
        <id>Q94AG2</id>
    </interactant>
    <interactant intactId="EBI-1633785">
        <id>P48349</id>
        <label>GRF6</label>
    </interactant>
    <organismsDiffer>false</organismsDiffer>
    <experiments>6</experiments>
</comment>
<comment type="interaction">
    <interactant intactId="EBI-1555537">
        <id>Q94AG2</id>
    </interactant>
    <interactant intactId="EBI-16924837">
        <id>Q9C8I6</id>
        <label>IOS1</label>
    </interactant>
    <organismsDiffer>false</organismsDiffer>
    <experiments>4</experiments>
</comment>
<comment type="interaction">
    <interactant intactId="EBI-1555537">
        <id>Q94AG2</id>
    </interactant>
    <interactant intactId="EBI-20651739">
        <id>Q9ZVD4</id>
        <label>LRR-RLK</label>
    </interactant>
    <organismsDiffer>false</organismsDiffer>
    <experiments>2</experiments>
</comment>
<comment type="interaction">
    <interactant intactId="EBI-1555537">
        <id>Q94AG2</id>
    </interactant>
    <interactant intactId="EBI-16172949">
        <id>Q9ZVR7</id>
        <label>PSKR1</label>
    </interactant>
    <organismsDiffer>false</organismsDiffer>
    <experiments>4</experiments>
</comment>
<comment type="interaction">
    <interactant intactId="EBI-1555537">
        <id>Q94AG2</id>
    </interactant>
    <interactant intactId="EBI-1555537">
        <id>Q94AG2</id>
        <label>SERK1</label>
    </interactant>
    <organismsDiffer>false</organismsDiffer>
    <experiments>7</experiments>
</comment>
<comment type="interaction">
    <interactant intactId="EBI-1555537">
        <id>Q94AG2</id>
    </interactant>
    <interactant intactId="EBI-6290483">
        <id>Q9SKG5</id>
        <label>SERK4</label>
    </interactant>
    <organismsDiffer>false</organismsDiffer>
    <experiments>4</experiments>
</comment>
<comment type="interaction">
    <interactant intactId="EBI-1555537">
        <id>Q94AG2</id>
    </interactant>
    <interactant intactId="EBI-16954301">
        <id>Q9C8M9</id>
        <label>SRF6</label>
    </interactant>
    <organismsDiffer>false</organismsDiffer>
    <experiments>3</experiments>
</comment>
<comment type="interaction">
    <interactant intactId="EBI-1555537">
        <id>Q94AG2</id>
    </interactant>
    <interactant intactId="EBI-17072125">
        <id>Q8RWZ1</id>
        <label>SUB</label>
    </interactant>
    <organismsDiffer>false</organismsDiffer>
    <experiments>4</experiments>
</comment>
<comment type="subcellular location">
    <subcellularLocation>
        <location evidence="6 11 12 15">Cell membrane</location>
        <topology evidence="2">Single-pass type I membrane protein</topology>
    </subcellularLocation>
    <subcellularLocation>
        <location evidence="11">Endoplasmic reticulum membrane</location>
        <topology evidence="2">Single-pass type I membrane protein</topology>
    </subcellularLocation>
</comment>
<comment type="tissue specificity">
    <text evidence="8 11 12 18">Expressed in flowers, tapetum, developing microspores, all cells of the embryo sac, provascular strands and developing vascular bundles. Low expression in adult vascular tissue. Detected in root meristem.</text>
</comment>
<comment type="developmental stage">
    <text evidence="8 11 18">Expressed during pollen development and megasporogenesis in the nucellus of developing ovules, in all cells of the embryo sac up to fertilization and in all cells of the developing embryo until the heart-shaped stage. Found in epidermal and vascular cells of the late torpedo and cotyledon stages embryos.</text>
</comment>
<comment type="domain">
    <text>The extracellular domain (26-234) is required for dimerization.</text>
</comment>
<comment type="PTM">
    <text>Glycosylated. Important for targeting to the plasma membrane.</text>
</comment>
<comment type="PTM">
    <text evidence="19">Intermolecular autophosphorylation. The catalytic activity of SERK1 depends on the presence of a phosphorylated Thr residue in SERK1. The phosphorylation is induced by brassinosteroids. Transphosphorylation by BRI1 occurs only on Ser-299 and Thr-462. Dephosphorylation of threonine residues by the kinase-associated protein phosphatase (KAPP) is involved in SERK1 endocytosis.</text>
</comment>
<comment type="disruption phenotype">
    <text evidence="12 13 24">No visible phenotype. Serk1 and serk2 double mutants are completely male sterile due to a failure in tapetum specification. Delayed floral abscission (PubMed:27058169).</text>
</comment>
<comment type="miscellaneous">
    <text>Seems to be related with early development of tissues in general rather than with embryogenesis.</text>
</comment>
<comment type="similarity">
    <text evidence="3">Belongs to the protein kinase superfamily. Ser/Thr protein kinase family.</text>
</comment>
<comment type="sequence caution" evidence="28">
    <conflict type="erroneous gene model prediction">
        <sequence resource="EMBL-CDS" id="AAF43236"/>
    </conflict>
</comment>
<proteinExistence type="evidence at protein level"/>
<feature type="signal peptide" evidence="2">
    <location>
        <begin position="1"/>
        <end position="26"/>
    </location>
</feature>
<feature type="chain" id="PRO_0000379596" description="Somatic embryogenesis receptor kinase 1">
    <location>
        <begin position="27"/>
        <end position="625"/>
    </location>
</feature>
<feature type="topological domain" description="Extracellular" evidence="2">
    <location>
        <begin position="27"/>
        <end position="238"/>
    </location>
</feature>
<feature type="transmembrane region" description="Helical" evidence="2">
    <location>
        <begin position="239"/>
        <end position="259"/>
    </location>
</feature>
<feature type="topological domain" description="Cytoplasmic" evidence="2">
    <location>
        <begin position="260"/>
        <end position="625"/>
    </location>
</feature>
<feature type="repeat" description="LRR 1" evidence="2">
    <location>
        <begin position="92"/>
        <end position="116"/>
    </location>
</feature>
<feature type="repeat" description="LRR 2" evidence="2">
    <location>
        <begin position="118"/>
        <end position="140"/>
    </location>
</feature>
<feature type="repeat" description="LRR 3" evidence="2">
    <location>
        <begin position="141"/>
        <end position="164"/>
    </location>
</feature>
<feature type="repeat" description="LRR 4" evidence="2">
    <location>
        <begin position="165"/>
        <end position="189"/>
    </location>
</feature>
<feature type="domain" description="Protein kinase" evidence="3">
    <location>
        <begin position="302"/>
        <end position="589"/>
    </location>
</feature>
<feature type="region of interest" description="Leucine-rich repeat receptor-like protein kinase binding" evidence="22 26 33 36">
    <location>
        <begin position="59"/>
        <end position="78"/>
    </location>
</feature>
<feature type="region of interest" description="Leucine-rich repeat receptor-like protein kinase binding" evidence="21 26 33 36">
    <location>
        <begin position="97"/>
        <end position="102"/>
    </location>
</feature>
<feature type="region of interest" description="Leucine-rich repeat receptor-like protein kinase binding" evidence="21 26 33 36">
    <location>
        <begin position="123"/>
        <end position="126"/>
    </location>
</feature>
<feature type="region of interest" description="Leucine-rich repeat receptor-like protein kinase binding" evidence="21 26 33 36">
    <location>
        <begin position="145"/>
        <end position="147"/>
    </location>
</feature>
<feature type="region of interest" description="Leucine-rich repeat receptor-like protein kinase binding" evidence="26 36">
    <location>
        <begin position="171"/>
        <end position="194"/>
    </location>
</feature>
<feature type="active site" description="Proton acceptor" evidence="3 5">
    <location>
        <position position="429"/>
    </location>
</feature>
<feature type="binding site" evidence="21 33">
    <location>
        <begin position="61"/>
        <end position="62"/>
    </location>
    <ligand>
        <name>brassinolide</name>
        <dbReference type="ChEBI" id="CHEBI:28277"/>
    </ligand>
</feature>
<feature type="binding site" evidence="3">
    <location>
        <begin position="308"/>
        <end position="316"/>
    </location>
    <ligand>
        <name>ATP</name>
        <dbReference type="ChEBI" id="CHEBI:30616"/>
    </ligand>
</feature>
<feature type="binding site" evidence="3">
    <location>
        <position position="330"/>
    </location>
    <ligand>
        <name>ATP</name>
        <dbReference type="ChEBI" id="CHEBI:30616"/>
    </ligand>
</feature>
<feature type="modified residue" description="Phosphoserine" evidence="19">
    <location>
        <position position="291"/>
    </location>
</feature>
<feature type="modified residue" description="Phosphoserine" evidence="19">
    <location>
        <position position="299"/>
    </location>
</feature>
<feature type="modified residue" description="Phosphoserine" evidence="19">
    <location>
        <position position="303"/>
    </location>
</feature>
<feature type="modified residue" description="Phosphothreonine" evidence="19">
    <location>
        <position position="325"/>
    </location>
</feature>
<feature type="modified residue" description="Phosphothreonine" evidence="19">
    <location>
        <position position="337"/>
    </location>
</feature>
<feature type="modified residue" description="Phosphothreonine" evidence="19">
    <location>
        <position position="346"/>
    </location>
</feature>
<feature type="modified residue" description="Phosphoserine" evidence="19">
    <location>
        <position position="352"/>
    </location>
</feature>
<feature type="modified residue" description="Phosphoserine" evidence="19">
    <location>
        <position position="383"/>
    </location>
</feature>
<feature type="modified residue" description="Phosphoserine" evidence="1">
    <location>
        <position position="386"/>
    </location>
</feature>
<feature type="modified residue" description="Phosphoserine" evidence="19">
    <location>
        <position position="394"/>
    </location>
</feature>
<feature type="modified residue" description="Phosphothreonine" evidence="19">
    <location>
        <position position="402"/>
    </location>
</feature>
<feature type="modified residue" description="Phosphoserine" evidence="19">
    <location>
        <position position="415"/>
    </location>
</feature>
<feature type="modified residue" description="Phosphotyrosine" evidence="19">
    <location>
        <position position="456"/>
    </location>
</feature>
<feature type="modified residue" description="Phosphothreonine" evidence="19">
    <location>
        <position position="459"/>
    </location>
</feature>
<feature type="modified residue" description="Phosphothreonine" evidence="19">
    <location>
        <position position="462"/>
    </location>
</feature>
<feature type="modified residue" description="Phosphothreonine" evidence="19">
    <location>
        <position position="463"/>
    </location>
</feature>
<feature type="modified residue" description="Phosphothreonine" evidence="19">
    <location>
        <position position="468"/>
    </location>
</feature>
<feature type="modified residue" description="Phosphotyrosine" evidence="19">
    <location>
        <position position="476"/>
    </location>
</feature>
<feature type="modified residue" description="Phosphoserine" evidence="19">
    <location>
        <position position="478"/>
    </location>
</feature>
<feature type="modified residue" description="Phosphothreonine" evidence="19">
    <location>
        <position position="479"/>
    </location>
</feature>
<feature type="modified residue" description="Phosphoserine" evidence="19">
    <location>
        <position position="483"/>
    </location>
</feature>
<feature type="modified residue" description="Phosphothreonine" evidence="19">
    <location>
        <position position="541"/>
    </location>
</feature>
<feature type="modified residue" description="Phosphotyrosine" evidence="19">
    <location>
        <position position="543"/>
    </location>
</feature>
<feature type="modified residue" description="Phosphothreonine" evidence="19">
    <location>
        <position position="559"/>
    </location>
</feature>
<feature type="modified residue" description="Phosphoserine" evidence="19">
    <location>
        <position position="606"/>
    </location>
</feature>
<feature type="modified residue" description="Phosphoserine" evidence="19">
    <location>
        <position position="612"/>
    </location>
</feature>
<feature type="modified residue" description="Phosphothreonine" evidence="19">
    <location>
        <position position="613"/>
    </location>
</feature>
<feature type="modified residue" description="Phosphotyrosine" evidence="19">
    <location>
        <position position="614"/>
    </location>
</feature>
<feature type="modified residue" description="Phosphoserine" evidence="19">
    <location>
        <position position="622"/>
    </location>
</feature>
<feature type="glycosylation site" description="N-linked (GlcNAc...) asparagine" evidence="4 21 32 33">
    <location>
        <position position="104"/>
    </location>
</feature>
<feature type="glycosylation site" description="N-linked (GlcNAc...) asparagine" evidence="4">
    <location>
        <position position="115"/>
    </location>
</feature>
<feature type="glycosylation site" description="N-linked (GlcNAc...) asparagine" evidence="4 21 22 24 32 33 34 35">
    <location>
        <position position="150"/>
    </location>
</feature>
<feature type="glycosylation site" description="N-linked (GlcNAc...) asparagine" evidence="4 21 33">
    <location>
        <position position="163"/>
    </location>
</feature>
<feature type="glycosylation site" description="N-linked (GlcNAc...) asparagine" evidence="4 21 24 32 35">
    <location>
        <position position="184"/>
    </location>
</feature>
<feature type="disulfide bond" evidence="21 22 24 26 32 33 34 35 36">
    <location>
        <begin position="58"/>
        <end position="65"/>
    </location>
</feature>
<feature type="disulfide bond" evidence="21 22 24 26 32 33 34 35">
    <location>
        <begin position="202"/>
        <end position="210"/>
    </location>
</feature>
<feature type="mutagenesis site" description="Loss of kinase activity." evidence="7">
    <original>K</original>
    <variation>E</variation>
    <location>
        <position position="330"/>
    </location>
</feature>
<feature type="mutagenesis site" description="No effect." evidence="7">
    <original>T</original>
    <variation>A</variation>
    <variation>E</variation>
    <location>
        <position position="459"/>
    </location>
</feature>
<feature type="mutagenesis site" description="Decreased kinase activity. Loss of kinase activity; when associated with A,E-463 and A,E-468." evidence="7">
    <original>T</original>
    <variation>A</variation>
    <variation>E</variation>
    <location>
        <position position="462"/>
    </location>
</feature>
<feature type="mutagenesis site" description="Loss of autophosphorylation. Loss of kinase activity; when associated with A,E-462 and A,E-468." evidence="7">
    <original>T</original>
    <variation>A</variation>
    <variation>E</variation>
    <location>
        <position position="463"/>
    </location>
</feature>
<feature type="mutagenesis site" description="Loss of kinase activity. Loss of kinase activity; when associated with A,E-462 and A,E-463." evidence="7">
    <original>T</original>
    <variation>A</variation>
    <variation>E</variation>
    <location>
        <position position="468"/>
    </location>
</feature>
<feature type="mutagenesis site" description="No effect. Reduction of autophosphorylation; when associated with A-570." evidence="19">
    <original>T</original>
    <variation>A</variation>
    <location>
        <position position="541"/>
    </location>
</feature>
<feature type="mutagenesis site" description="Loss of autophosphorylation." evidence="19">
    <original>S</original>
    <variation>A</variation>
    <location>
        <position position="562"/>
    </location>
</feature>
<feature type="mutagenesis site" description="No effect. Reduction of autophosphorylation; when associated with A-541." evidence="19">
    <original>S</original>
    <variation>A</variation>
    <location>
        <position position="570"/>
    </location>
</feature>
<feature type="sequence conflict" description="In Ref. 5; AAK82463/AAN72307." evidence="28" ref="5">
    <original>T</original>
    <variation>R</variation>
    <location>
        <position position="53"/>
    </location>
</feature>
<feature type="sequence conflict" description="In Ref. 1; CAB42254." evidence="28" ref="1">
    <original>L</original>
    <variation>P</variation>
    <location>
        <position position="251"/>
    </location>
</feature>
<feature type="sequence conflict" description="In Ref. 1; CAB42254." evidence="28" ref="1">
    <original>K</original>
    <variation>S</variation>
    <location>
        <position position="266"/>
    </location>
</feature>
<feature type="sequence conflict" description="In Ref. 5; AAK82463/AAN72307." evidence="28" ref="5">
    <original>V</original>
    <variation>I</variation>
    <location>
        <position position="327"/>
    </location>
</feature>
<feature type="helix" evidence="38">
    <location>
        <begin position="28"/>
        <end position="39"/>
    </location>
</feature>
<feature type="turn" evidence="38">
    <location>
        <begin position="46"/>
        <end position="49"/>
    </location>
</feature>
<feature type="strand" evidence="37">
    <location>
        <begin position="54"/>
        <end position="56"/>
    </location>
</feature>
<feature type="helix" evidence="38">
    <location>
        <begin position="57"/>
        <end position="59"/>
    </location>
</feature>
<feature type="strand" evidence="38">
    <location>
        <begin position="63"/>
        <end position="65"/>
    </location>
</feature>
<feature type="strand" evidence="38">
    <location>
        <begin position="71"/>
        <end position="75"/>
    </location>
</feature>
<feature type="strand" evidence="38">
    <location>
        <begin position="82"/>
        <end position="84"/>
    </location>
</feature>
<feature type="helix" evidence="38">
    <location>
        <begin position="87"/>
        <end position="91"/>
    </location>
</feature>
<feature type="strand" evidence="38">
    <location>
        <begin position="97"/>
        <end position="99"/>
    </location>
</feature>
<feature type="strand" evidence="38">
    <location>
        <begin position="106"/>
        <end position="108"/>
    </location>
</feature>
<feature type="helix" evidence="38">
    <location>
        <begin position="111"/>
        <end position="115"/>
    </location>
</feature>
<feature type="strand" evidence="38">
    <location>
        <begin position="120"/>
        <end position="123"/>
    </location>
</feature>
<feature type="strand" evidence="38">
    <location>
        <begin position="126"/>
        <end position="131"/>
    </location>
</feature>
<feature type="helix" evidence="38">
    <location>
        <begin position="135"/>
        <end position="139"/>
    </location>
</feature>
<feature type="strand" evidence="38">
    <location>
        <begin position="145"/>
        <end position="147"/>
    </location>
</feature>
<feature type="strand" evidence="38">
    <location>
        <begin position="150"/>
        <end position="155"/>
    </location>
</feature>
<feature type="helix" evidence="38">
    <location>
        <begin position="159"/>
        <end position="163"/>
    </location>
</feature>
<feature type="strand" evidence="38">
    <location>
        <begin position="168"/>
        <end position="171"/>
    </location>
</feature>
<feature type="strand" evidence="38">
    <location>
        <begin position="174"/>
        <end position="180"/>
    </location>
</feature>
<feature type="helix" evidence="38">
    <location>
        <begin position="185"/>
        <end position="189"/>
    </location>
</feature>
<feature type="helix" evidence="38">
    <location>
        <begin position="192"/>
        <end position="194"/>
    </location>
</feature>
<feature type="strand" evidence="38">
    <location>
        <begin position="199"/>
        <end position="203"/>
    </location>
</feature>
<feature type="turn" evidence="38">
    <location>
        <begin position="204"/>
        <end position="207"/>
    </location>
</feature>
<accession>Q94AG2</accession>
<accession>C0LGI6</accession>
<accession>Q9M9G3</accession>
<keyword id="KW-0002">3D-structure</keyword>
<keyword id="KW-0067">ATP-binding</keyword>
<keyword id="KW-1003">Cell membrane</keyword>
<keyword id="KW-1015">Disulfide bond</keyword>
<keyword id="KW-0256">Endoplasmic reticulum</keyword>
<keyword id="KW-0325">Glycoprotein</keyword>
<keyword id="KW-0418">Kinase</keyword>
<keyword id="KW-0433">Leucine-rich repeat</keyword>
<keyword id="KW-0472">Membrane</keyword>
<keyword id="KW-0547">Nucleotide-binding</keyword>
<keyword id="KW-0597">Phosphoprotein</keyword>
<keyword id="KW-0675">Receptor</keyword>
<keyword id="KW-1185">Reference proteome</keyword>
<keyword id="KW-0677">Repeat</keyword>
<keyword id="KW-0723">Serine/threonine-protein kinase</keyword>
<keyword id="KW-0732">Signal</keyword>
<keyword id="KW-0808">Transferase</keyword>
<keyword id="KW-0812">Transmembrane</keyword>
<keyword id="KW-1133">Transmembrane helix</keyword>
<keyword id="KW-0829">Tyrosine-protein kinase</keyword>